<dbReference type="EMBL" id="AE014075">
    <property type="protein sequence ID" value="AAN80077.1"/>
    <property type="molecule type" value="Genomic_DNA"/>
</dbReference>
<dbReference type="RefSeq" id="WP_000888771.1">
    <property type="nucleotide sequence ID" value="NZ_CP051263.1"/>
</dbReference>
<dbReference type="SMR" id="Q8FI39"/>
<dbReference type="STRING" id="199310.c1609"/>
<dbReference type="KEGG" id="ecc:c1609"/>
<dbReference type="eggNOG" id="ENOG50336K1">
    <property type="taxonomic scope" value="Bacteria"/>
</dbReference>
<dbReference type="HOGENOM" id="CLU_164045_1_0_6"/>
<dbReference type="BioCyc" id="ECOL199310:C1609-MONOMER"/>
<dbReference type="Proteomes" id="UP000001410">
    <property type="component" value="Chromosome"/>
</dbReference>
<dbReference type="GO" id="GO:0003677">
    <property type="term" value="F:DNA binding"/>
    <property type="evidence" value="ECO:0007669"/>
    <property type="project" value="UniProtKB-KW"/>
</dbReference>
<dbReference type="GO" id="GO:0071468">
    <property type="term" value="P:cellular response to acidic pH"/>
    <property type="evidence" value="ECO:0007669"/>
    <property type="project" value="InterPro"/>
</dbReference>
<dbReference type="FunFam" id="1.20.5.5260:FF:000001">
    <property type="entry name" value="Two-component-system connector protein AriR"/>
    <property type="match status" value="1"/>
</dbReference>
<dbReference type="Gene3D" id="1.20.5.5260">
    <property type="match status" value="1"/>
</dbReference>
<dbReference type="InterPro" id="IPR024753">
    <property type="entry name" value="AriR"/>
</dbReference>
<dbReference type="Pfam" id="PF10798">
    <property type="entry name" value="YmgB"/>
    <property type="match status" value="1"/>
</dbReference>
<proteinExistence type="inferred from homology"/>
<accession>Q8FI39</accession>
<comment type="function">
    <text evidence="1">Regulates expression of genes involved in acid-resistance and biofilm formation. May be a non-specific DNA-binding protein that binds genes and/or intergenic regions via a geometric recognition (By similarity).</text>
</comment>
<comment type="subunit">
    <text evidence="1">Homodimer.</text>
</comment>
<comment type="similarity">
    <text evidence="2">Belongs to the AriR family.</text>
</comment>
<sequence length="88" mass="9696">MLEDTTIHNAISDKALSSYFRSSGNLLEEESAVLGQAVTNLMLSGDNVNNKNIILSLIHSLETTSDILKADVIRKTLEIVLRYTADDM</sequence>
<protein>
    <recommendedName>
        <fullName>Regulatory protein AriR</fullName>
    </recommendedName>
</protein>
<name>ARIR_ECOL6</name>
<gene>
    <name type="primary">ariR</name>
    <name type="ordered locus">c1609</name>
</gene>
<feature type="chain" id="PRO_0000350560" description="Regulatory protein AriR">
    <location>
        <begin position="1"/>
        <end position="88"/>
    </location>
</feature>
<reference key="1">
    <citation type="journal article" date="2002" name="Proc. Natl. Acad. Sci. U.S.A.">
        <title>Extensive mosaic structure revealed by the complete genome sequence of uropathogenic Escherichia coli.</title>
        <authorList>
            <person name="Welch R.A."/>
            <person name="Burland V."/>
            <person name="Plunkett G. III"/>
            <person name="Redford P."/>
            <person name="Roesch P."/>
            <person name="Rasko D."/>
            <person name="Buckles E.L."/>
            <person name="Liou S.-R."/>
            <person name="Boutin A."/>
            <person name="Hackett J."/>
            <person name="Stroud D."/>
            <person name="Mayhew G.F."/>
            <person name="Rose D.J."/>
            <person name="Zhou S."/>
            <person name="Schwartz D.C."/>
            <person name="Perna N.T."/>
            <person name="Mobley H.L.T."/>
            <person name="Donnenberg M.S."/>
            <person name="Blattner F.R."/>
        </authorList>
    </citation>
    <scope>NUCLEOTIDE SEQUENCE [LARGE SCALE GENOMIC DNA]</scope>
    <source>
        <strain>CFT073 / ATCC 700928 / UPEC</strain>
    </source>
</reference>
<evidence type="ECO:0000250" key="1"/>
<evidence type="ECO:0000305" key="2"/>
<keyword id="KW-0238">DNA-binding</keyword>
<keyword id="KW-1185">Reference proteome</keyword>
<organism>
    <name type="scientific">Escherichia coli O6:H1 (strain CFT073 / ATCC 700928 / UPEC)</name>
    <dbReference type="NCBI Taxonomy" id="199310"/>
    <lineage>
        <taxon>Bacteria</taxon>
        <taxon>Pseudomonadati</taxon>
        <taxon>Pseudomonadota</taxon>
        <taxon>Gammaproteobacteria</taxon>
        <taxon>Enterobacterales</taxon>
        <taxon>Enterobacteriaceae</taxon>
        <taxon>Escherichia</taxon>
    </lineage>
</organism>